<sequence length="154" mass="18130">MKPSFSINSNYLFKRFFGKNFEAGIELCLQIIKDSLQLSFQPEFALMIVSPWKMKRLNRQFLNRKGVTDVISICYNENEAGFSPAIGEIFLCPKHIFKQAKQFGCTPWFLLTRNLIHGLLHLFEFDHEQSLAFESVTMFFQDEIHETVLKLWNR</sequence>
<accession>P75209</accession>
<organism>
    <name type="scientific">Mycoplasma pneumoniae (strain ATCC 29342 / M129 / Subtype 1)</name>
    <name type="common">Mycoplasmoides pneumoniae</name>
    <dbReference type="NCBI Taxonomy" id="272634"/>
    <lineage>
        <taxon>Bacteria</taxon>
        <taxon>Bacillati</taxon>
        <taxon>Mycoplasmatota</taxon>
        <taxon>Mycoplasmoidales</taxon>
        <taxon>Mycoplasmoidaceae</taxon>
        <taxon>Mycoplasmoides</taxon>
    </lineage>
</organism>
<feature type="chain" id="PRO_0000210589" description="Endoribonuclease YbeY">
    <location>
        <begin position="1"/>
        <end position="154"/>
    </location>
</feature>
<feature type="binding site" evidence="1">
    <location>
        <position position="117"/>
    </location>
    <ligand>
        <name>Zn(2+)</name>
        <dbReference type="ChEBI" id="CHEBI:29105"/>
        <note>catalytic</note>
    </ligand>
</feature>
<feature type="binding site" evidence="1">
    <location>
        <position position="121"/>
    </location>
    <ligand>
        <name>Zn(2+)</name>
        <dbReference type="ChEBI" id="CHEBI:29105"/>
        <note>catalytic</note>
    </ligand>
</feature>
<feature type="binding site" evidence="1">
    <location>
        <position position="127"/>
    </location>
    <ligand>
        <name>Zn(2+)</name>
        <dbReference type="ChEBI" id="CHEBI:29105"/>
        <note>catalytic</note>
    </ligand>
</feature>
<dbReference type="EC" id="3.1.-.-" evidence="1"/>
<dbReference type="EMBL" id="U00089">
    <property type="protein sequence ID" value="AAB95921.1"/>
    <property type="status" value="ALT_INIT"/>
    <property type="molecule type" value="Genomic_DNA"/>
</dbReference>
<dbReference type="PIR" id="S73599">
    <property type="entry name" value="S73599"/>
</dbReference>
<dbReference type="RefSeq" id="NP_110258.2">
    <property type="nucleotide sequence ID" value="NC_000912.1"/>
</dbReference>
<dbReference type="RefSeq" id="WP_015344925.1">
    <property type="nucleotide sequence ID" value="NZ_OU342337.1"/>
</dbReference>
<dbReference type="SMR" id="P75209"/>
<dbReference type="IntAct" id="P75209">
    <property type="interactions" value="1"/>
</dbReference>
<dbReference type="STRING" id="272634.MPN_569"/>
<dbReference type="EnsemblBacteria" id="AAB95921">
    <property type="protein sequence ID" value="AAB95921"/>
    <property type="gene ID" value="MPN_569"/>
</dbReference>
<dbReference type="GeneID" id="66608748"/>
<dbReference type="KEGG" id="mpn:MPN_569"/>
<dbReference type="PATRIC" id="fig|272634.6.peg.631"/>
<dbReference type="HOGENOM" id="CLU_150621_0_0_14"/>
<dbReference type="OrthoDB" id="9807740at2"/>
<dbReference type="BioCyc" id="MPNE272634:G1GJ3-933-MONOMER"/>
<dbReference type="Proteomes" id="UP000000808">
    <property type="component" value="Chromosome"/>
</dbReference>
<dbReference type="GO" id="GO:0005737">
    <property type="term" value="C:cytoplasm"/>
    <property type="evidence" value="ECO:0007669"/>
    <property type="project" value="UniProtKB-SubCell"/>
</dbReference>
<dbReference type="GO" id="GO:0004222">
    <property type="term" value="F:metalloendopeptidase activity"/>
    <property type="evidence" value="ECO:0007669"/>
    <property type="project" value="InterPro"/>
</dbReference>
<dbReference type="GO" id="GO:0004521">
    <property type="term" value="F:RNA endonuclease activity"/>
    <property type="evidence" value="ECO:0007669"/>
    <property type="project" value="UniProtKB-UniRule"/>
</dbReference>
<dbReference type="GO" id="GO:0008270">
    <property type="term" value="F:zinc ion binding"/>
    <property type="evidence" value="ECO:0007669"/>
    <property type="project" value="UniProtKB-UniRule"/>
</dbReference>
<dbReference type="GO" id="GO:0006364">
    <property type="term" value="P:rRNA processing"/>
    <property type="evidence" value="ECO:0007669"/>
    <property type="project" value="UniProtKB-UniRule"/>
</dbReference>
<dbReference type="Gene3D" id="3.40.390.30">
    <property type="entry name" value="Metalloproteases ('zincins'), catalytic domain"/>
    <property type="match status" value="1"/>
</dbReference>
<dbReference type="HAMAP" id="MF_00009">
    <property type="entry name" value="Endoribonucl_YbeY"/>
    <property type="match status" value="1"/>
</dbReference>
<dbReference type="InterPro" id="IPR023091">
    <property type="entry name" value="MetalPrtase_cat_dom_sf_prd"/>
</dbReference>
<dbReference type="InterPro" id="IPR002036">
    <property type="entry name" value="YbeY"/>
</dbReference>
<dbReference type="NCBIfam" id="TIGR00043">
    <property type="entry name" value="rRNA maturation RNase YbeY"/>
    <property type="match status" value="1"/>
</dbReference>
<dbReference type="Pfam" id="PF02130">
    <property type="entry name" value="YbeY"/>
    <property type="match status" value="1"/>
</dbReference>
<dbReference type="SUPFAM" id="SSF55486">
    <property type="entry name" value="Metalloproteases ('zincins'), catalytic domain"/>
    <property type="match status" value="1"/>
</dbReference>
<evidence type="ECO:0000255" key="1">
    <source>
        <dbReference type="HAMAP-Rule" id="MF_00009"/>
    </source>
</evidence>
<evidence type="ECO:0000305" key="2"/>
<keyword id="KW-0963">Cytoplasm</keyword>
<keyword id="KW-0255">Endonuclease</keyword>
<keyword id="KW-0378">Hydrolase</keyword>
<keyword id="KW-0479">Metal-binding</keyword>
<keyword id="KW-0540">Nuclease</keyword>
<keyword id="KW-1185">Reference proteome</keyword>
<keyword id="KW-0690">Ribosome biogenesis</keyword>
<keyword id="KW-0698">rRNA processing</keyword>
<keyword id="KW-0862">Zinc</keyword>
<protein>
    <recommendedName>
        <fullName evidence="1">Endoribonuclease YbeY</fullName>
        <ecNumber evidence="1">3.1.-.-</ecNumber>
    </recommendedName>
</protein>
<gene>
    <name evidence="1" type="primary">ybeY</name>
    <name type="ordered locus">MPN_569</name>
    <name type="ORF">MP273</name>
</gene>
<comment type="function">
    <text evidence="1">Single strand-specific metallo-endoribonuclease involved in late-stage 70S ribosome quality control and in maturation of the 3' terminus of the 16S rRNA.</text>
</comment>
<comment type="cofactor">
    <cofactor evidence="1">
        <name>Zn(2+)</name>
        <dbReference type="ChEBI" id="CHEBI:29105"/>
    </cofactor>
    <text evidence="1">Binds 1 zinc ion.</text>
</comment>
<comment type="subcellular location">
    <subcellularLocation>
        <location evidence="1">Cytoplasm</location>
    </subcellularLocation>
</comment>
<comment type="similarity">
    <text evidence="1">Belongs to the endoribonuclease YbeY family.</text>
</comment>
<comment type="sequence caution" evidence="2">
    <conflict type="erroneous initiation">
        <sequence resource="EMBL-CDS" id="AAB95921"/>
    </conflict>
</comment>
<name>YBEY_MYCPN</name>
<proteinExistence type="inferred from homology"/>
<reference key="1">
    <citation type="journal article" date="1996" name="Nucleic Acids Res.">
        <title>Complete sequence analysis of the genome of the bacterium Mycoplasma pneumoniae.</title>
        <authorList>
            <person name="Himmelreich R."/>
            <person name="Hilbert H."/>
            <person name="Plagens H."/>
            <person name="Pirkl E."/>
            <person name="Li B.-C."/>
            <person name="Herrmann R."/>
        </authorList>
    </citation>
    <scope>NUCLEOTIDE SEQUENCE [LARGE SCALE GENOMIC DNA]</scope>
    <source>
        <strain>ATCC 29342 / M129 / Subtype 1</strain>
    </source>
</reference>